<feature type="chain" id="PRO_0000203122" description="TEL2-interacting protein 2">
    <location>
        <begin position="1"/>
        <end position="421"/>
    </location>
</feature>
<gene>
    <name type="primary">TTI2</name>
    <name type="ordered locus">YJR136C</name>
    <name type="ORF">J2124</name>
</gene>
<proteinExistence type="evidence at protein level"/>
<dbReference type="EMBL" id="Z49636">
    <property type="protein sequence ID" value="CAA89668.1"/>
    <property type="molecule type" value="Genomic_DNA"/>
</dbReference>
<dbReference type="EMBL" id="AY692606">
    <property type="protein sequence ID" value="AAT92625.1"/>
    <property type="molecule type" value="Genomic_DNA"/>
</dbReference>
<dbReference type="EMBL" id="BK006943">
    <property type="protein sequence ID" value="DAA08921.1"/>
    <property type="molecule type" value="Genomic_DNA"/>
</dbReference>
<dbReference type="PIR" id="S57159">
    <property type="entry name" value="S57159"/>
</dbReference>
<dbReference type="RefSeq" id="NP_012670.3">
    <property type="nucleotide sequence ID" value="NM_001181794.3"/>
</dbReference>
<dbReference type="BioGRID" id="33892">
    <property type="interactions" value="214"/>
</dbReference>
<dbReference type="ComplexPortal" id="CPX-1422">
    <property type="entry name" value="TEL2-TTI1-TTI2 complex"/>
</dbReference>
<dbReference type="DIP" id="DIP-1913N"/>
<dbReference type="FunCoup" id="P47168">
    <property type="interactions" value="26"/>
</dbReference>
<dbReference type="IntAct" id="P47168">
    <property type="interactions" value="16"/>
</dbReference>
<dbReference type="MINT" id="P47168"/>
<dbReference type="STRING" id="4932.YJR136C"/>
<dbReference type="iPTMnet" id="P47168"/>
<dbReference type="PaxDb" id="4932-YJR136C"/>
<dbReference type="PeptideAtlas" id="P47168"/>
<dbReference type="EnsemblFungi" id="YJR136C_mRNA">
    <property type="protein sequence ID" value="YJR136C"/>
    <property type="gene ID" value="YJR136C"/>
</dbReference>
<dbReference type="GeneID" id="853601"/>
<dbReference type="KEGG" id="sce:YJR136C"/>
<dbReference type="AGR" id="SGD:S000003897"/>
<dbReference type="SGD" id="S000003897">
    <property type="gene designation" value="TTI2"/>
</dbReference>
<dbReference type="VEuPathDB" id="FungiDB:YJR136C"/>
<dbReference type="eggNOG" id="ENOG502QU79">
    <property type="taxonomic scope" value="Eukaryota"/>
</dbReference>
<dbReference type="HOGENOM" id="CLU_054067_0_0_1"/>
<dbReference type="InParanoid" id="P47168"/>
<dbReference type="OMA" id="SSNLWWI"/>
<dbReference type="OrthoDB" id="6417021at2759"/>
<dbReference type="BioCyc" id="YEAST:G3O-31753-MONOMER"/>
<dbReference type="BioGRID-ORCS" id="853601">
    <property type="hits" value="3 hits in 10 CRISPR screens"/>
</dbReference>
<dbReference type="PRO" id="PR:P47168"/>
<dbReference type="Proteomes" id="UP000002311">
    <property type="component" value="Chromosome X"/>
</dbReference>
<dbReference type="RNAct" id="P47168">
    <property type="molecule type" value="protein"/>
</dbReference>
<dbReference type="GO" id="GO:0005737">
    <property type="term" value="C:cytoplasm"/>
    <property type="evidence" value="ECO:0007005"/>
    <property type="project" value="SGD"/>
</dbReference>
<dbReference type="GO" id="GO:0005634">
    <property type="term" value="C:nucleus"/>
    <property type="evidence" value="ECO:0000303"/>
    <property type="project" value="ComplexPortal"/>
</dbReference>
<dbReference type="GO" id="GO:0110078">
    <property type="term" value="C:TTT Hsp90 cochaperone complex"/>
    <property type="evidence" value="ECO:0000353"/>
    <property type="project" value="ComplexPortal"/>
</dbReference>
<dbReference type="GO" id="GO:0034605">
    <property type="term" value="P:cellular response to heat"/>
    <property type="evidence" value="ECO:0000315"/>
    <property type="project" value="SGD"/>
</dbReference>
<dbReference type="GO" id="GO:0031669">
    <property type="term" value="P:cellular response to nutrient levels"/>
    <property type="evidence" value="ECO:0000315"/>
    <property type="project" value="SGD"/>
</dbReference>
<dbReference type="GO" id="GO:0071472">
    <property type="term" value="P:cellular response to salt stress"/>
    <property type="evidence" value="ECO:0000315"/>
    <property type="project" value="SGD"/>
</dbReference>
<dbReference type="GO" id="GO:0006325">
    <property type="term" value="P:chromatin organization"/>
    <property type="evidence" value="ECO:0007669"/>
    <property type="project" value="UniProtKB-KW"/>
</dbReference>
<dbReference type="GO" id="GO:0006974">
    <property type="term" value="P:DNA damage response"/>
    <property type="evidence" value="ECO:0000315"/>
    <property type="project" value="SGD"/>
</dbReference>
<dbReference type="GO" id="GO:2000003">
    <property type="term" value="P:positive regulation of DNA damage checkpoint"/>
    <property type="evidence" value="ECO:0000303"/>
    <property type="project" value="ComplexPortal"/>
</dbReference>
<dbReference type="GO" id="GO:0050821">
    <property type="term" value="P:protein stabilization"/>
    <property type="evidence" value="ECO:0000303"/>
    <property type="project" value="ComplexPortal"/>
</dbReference>
<dbReference type="InterPro" id="IPR018870">
    <property type="entry name" value="Tti2"/>
</dbReference>
<dbReference type="Pfam" id="PF10521">
    <property type="entry name" value="Tti2"/>
    <property type="match status" value="1"/>
</dbReference>
<evidence type="ECO:0000269" key="1">
    <source>
    </source>
</evidence>
<evidence type="ECO:0000269" key="2">
    <source>
    </source>
</evidence>
<evidence type="ECO:0000269" key="3">
    <source>
    </source>
</evidence>
<evidence type="ECO:0000269" key="4">
    <source>
    </source>
</evidence>
<evidence type="ECO:0000305" key="5"/>
<evidence type="ECO:0000305" key="6">
    <source>
    </source>
</evidence>
<accession>P47168</accession>
<accession>D6VWV5</accession>
<name>TTI2_YEAST</name>
<reference key="1">
    <citation type="journal article" date="1996" name="EMBO J.">
        <title>Complete nucleotide sequence of Saccharomyces cerevisiae chromosome X.</title>
        <authorList>
            <person name="Galibert F."/>
            <person name="Alexandraki D."/>
            <person name="Baur A."/>
            <person name="Boles E."/>
            <person name="Chalwatzis N."/>
            <person name="Chuat J.-C."/>
            <person name="Coster F."/>
            <person name="Cziepluch C."/>
            <person name="de Haan M."/>
            <person name="Domdey H."/>
            <person name="Durand P."/>
            <person name="Entian K.-D."/>
            <person name="Gatius M."/>
            <person name="Goffeau A."/>
            <person name="Grivell L.A."/>
            <person name="Hennemann A."/>
            <person name="Herbert C.J."/>
            <person name="Heumann K."/>
            <person name="Hilger F."/>
            <person name="Hollenberg C.P."/>
            <person name="Huang M.-E."/>
            <person name="Jacq C."/>
            <person name="Jauniaux J.-C."/>
            <person name="Katsoulou C."/>
            <person name="Kirchrath L."/>
            <person name="Kleine K."/>
            <person name="Kordes E."/>
            <person name="Koetter P."/>
            <person name="Liebl S."/>
            <person name="Louis E.J."/>
            <person name="Manus V."/>
            <person name="Mewes H.-W."/>
            <person name="Miosga T."/>
            <person name="Obermaier B."/>
            <person name="Perea J."/>
            <person name="Pohl T.M."/>
            <person name="Portetelle D."/>
            <person name="Pujol A."/>
            <person name="Purnelle B."/>
            <person name="Ramezani Rad M."/>
            <person name="Rasmussen S.W."/>
            <person name="Rose M."/>
            <person name="Rossau R."/>
            <person name="Schaaff-Gerstenschlaeger I."/>
            <person name="Smits P.H.M."/>
            <person name="Scarcez T."/>
            <person name="Soriano N."/>
            <person name="To Van D."/>
            <person name="Tzermia M."/>
            <person name="Van Broekhoven A."/>
            <person name="Vandenbol M."/>
            <person name="Wedler H."/>
            <person name="von Wettstein D."/>
            <person name="Wambutt R."/>
            <person name="Zagulski M."/>
            <person name="Zollner A."/>
            <person name="Karpfinger-Hartl L."/>
        </authorList>
    </citation>
    <scope>NUCLEOTIDE SEQUENCE [LARGE SCALE GENOMIC DNA]</scope>
    <source>
        <strain>ATCC 204508 / S288c</strain>
    </source>
</reference>
<reference key="2">
    <citation type="journal article" date="2014" name="G3 (Bethesda)">
        <title>The reference genome sequence of Saccharomyces cerevisiae: Then and now.</title>
        <authorList>
            <person name="Engel S.R."/>
            <person name="Dietrich F.S."/>
            <person name="Fisk D.G."/>
            <person name="Binkley G."/>
            <person name="Balakrishnan R."/>
            <person name="Costanzo M.C."/>
            <person name="Dwight S.S."/>
            <person name="Hitz B.C."/>
            <person name="Karra K."/>
            <person name="Nash R.S."/>
            <person name="Weng S."/>
            <person name="Wong E.D."/>
            <person name="Lloyd P."/>
            <person name="Skrzypek M.S."/>
            <person name="Miyasato S.R."/>
            <person name="Simison M."/>
            <person name="Cherry J.M."/>
        </authorList>
    </citation>
    <scope>GENOME REANNOTATION</scope>
    <source>
        <strain>ATCC 204508 / S288c</strain>
    </source>
</reference>
<reference key="3">
    <citation type="journal article" date="2007" name="Genome Res.">
        <title>Approaching a complete repository of sequence-verified protein-encoding clones for Saccharomyces cerevisiae.</title>
        <authorList>
            <person name="Hu Y."/>
            <person name="Rolfs A."/>
            <person name="Bhullar B."/>
            <person name="Murthy T.V.S."/>
            <person name="Zhu C."/>
            <person name="Berger M.F."/>
            <person name="Camargo A.A."/>
            <person name="Kelley F."/>
            <person name="McCarron S."/>
            <person name="Jepson D."/>
            <person name="Richardson A."/>
            <person name="Raphael J."/>
            <person name="Moreira D."/>
            <person name="Taycher E."/>
            <person name="Zuo D."/>
            <person name="Mohr S."/>
            <person name="Kane M.F."/>
            <person name="Williamson J."/>
            <person name="Simpson A.J.G."/>
            <person name="Bulyk M.L."/>
            <person name="Harlow E."/>
            <person name="Marsischky G."/>
            <person name="Kolodner R.D."/>
            <person name="LaBaer J."/>
        </authorList>
    </citation>
    <scope>NUCLEOTIDE SEQUENCE [GENOMIC DNA]</scope>
    <source>
        <strain>ATCC 204508 / S288c</strain>
    </source>
</reference>
<reference key="4">
    <citation type="journal article" date="2003" name="Mol. Cell">
        <title>Assigning function to yeast proteins by integration of technologies.</title>
        <authorList>
            <person name="Hazbun T.R."/>
            <person name="Malmstroem L."/>
            <person name="Anderson S."/>
            <person name="Graczyk B.J."/>
            <person name="Fox B."/>
            <person name="Riffle M."/>
            <person name="Sundin B.A."/>
            <person name="Aranda J.D."/>
            <person name="McDonald W.H."/>
            <person name="Chiu C.-H."/>
            <person name="Snydsman B.E."/>
            <person name="Bradley P."/>
            <person name="Muller E.G.D."/>
            <person name="Fields S."/>
            <person name="Baker D."/>
            <person name="Yates J.R. III"/>
            <person name="Davis T.N."/>
        </authorList>
    </citation>
    <scope>IDENTIFICATION BY MASS SPECTROMETRY</scope>
</reference>
<reference key="5">
    <citation type="journal article" date="2003" name="Nature">
        <title>Global analysis of protein localization in budding yeast.</title>
        <authorList>
            <person name="Huh W.-K."/>
            <person name="Falvo J.V."/>
            <person name="Gerke L.C."/>
            <person name="Carroll A.S."/>
            <person name="Howson R.W."/>
            <person name="Weissman J.S."/>
            <person name="O'Shea E.K."/>
        </authorList>
    </citation>
    <scope>SUBCELLULAR LOCATION [LARGE SCALE ANALYSIS]</scope>
</reference>
<reference key="6">
    <citation type="journal article" date="2003" name="Nature">
        <title>Global analysis of protein expression in yeast.</title>
        <authorList>
            <person name="Ghaemmaghami S."/>
            <person name="Huh W.-K."/>
            <person name="Bower K."/>
            <person name="Howson R.W."/>
            <person name="Belle A."/>
            <person name="Dephoure N."/>
            <person name="O'Shea E.K."/>
            <person name="Weissman J.S."/>
        </authorList>
    </citation>
    <scope>LEVEL OF PROTEIN EXPRESSION [LARGE SCALE ANALYSIS]</scope>
</reference>
<reference key="7">
    <citation type="journal article" date="2008" name="Genome Biol.">
        <title>Chromatin Central: towards the comparative proteome by accurate mapping of the yeast proteomic environment.</title>
        <authorList>
            <person name="Shevchenko A."/>
            <person name="Roguev A."/>
            <person name="Schaft D."/>
            <person name="Buchanan L."/>
            <person name="Habermann B."/>
            <person name="Sakalar C."/>
            <person name="Thomas H."/>
            <person name="Krogan N.J."/>
            <person name="Shevchenko A."/>
            <person name="Stewart A.F."/>
        </authorList>
    </citation>
    <scope>IDENTIFICATION IN THE ASTRA COMPLEX</scope>
    <scope>IDENTIFICATION BY MASS SPECTROMETRY</scope>
</reference>
<reference key="8">
    <citation type="journal article" date="2010" name="Genes Dev.">
        <title>Tel2 structure and function in the Hsp90-dependent maturation of mTOR and ATR complexes.</title>
        <authorList>
            <person name="Takai H."/>
            <person name="Xie Y."/>
            <person name="de Lange T."/>
            <person name="Pavletich N.P."/>
        </authorList>
    </citation>
    <scope>INTERACTION WITH TEL2 AND TTI1</scope>
</reference>
<reference key="9">
    <citation type="journal article" date="2012" name="Proc. Natl. Acad. Sci. U.S.A.">
        <title>N-terminal acetylome analyses and functional insights of the N-terminal acetyltransferase NatB.</title>
        <authorList>
            <person name="Van Damme P."/>
            <person name="Lasa M."/>
            <person name="Polevoda B."/>
            <person name="Gazquez C."/>
            <person name="Elosegui-Artola A."/>
            <person name="Kim D.S."/>
            <person name="De Juan-Pardo E."/>
            <person name="Demeyer K."/>
            <person name="Hole K."/>
            <person name="Larrea E."/>
            <person name="Timmerman E."/>
            <person name="Prieto J."/>
            <person name="Arnesen T."/>
            <person name="Sherman F."/>
            <person name="Gevaert K."/>
            <person name="Aldabe R."/>
        </authorList>
    </citation>
    <scope>IDENTIFICATION BY MASS SPECTROMETRY [LARGE SCALE ANALYSIS]</scope>
</reference>
<sequence length="421" mass="48649">MTAVTDIIDELNDSSLSSTRLRELCLQLRKKTDTGCAITVSDEVNLIESLSYHSISPGVDIQINTDVLQTIDYYFQRNKSEHDEIMCVLISKLQPLLLKRKSNFELKEQRNLGLKPTLGMSLKEDNLMQAWVSQGGLKGIPLFYVILLHLKRRDISTNLSWIIPGILNILDDTTDIRRIKLRGVLLLQTLLNHTFMNETNDSKWIQFSSTGLFPLFEKTLINMCYFLPPSYNADETIAIWRVVFPTIQSLYKVEFLDNYTKYQYHLEKFMSEIILQNIIPRASLAYENLTLYALECTMNILRLQREGSVVHLQRLIFVLGEYIVRNPFYTTFPKLISKTLSVVSTLIKVCPNERIVAHRFDILSLILVTYDKCSQEDALNESILQQCKETISWLLNCDCAMGEQLSTLSKQPRFQLLFEFS</sequence>
<organism>
    <name type="scientific">Saccharomyces cerevisiae (strain ATCC 204508 / S288c)</name>
    <name type="common">Baker's yeast</name>
    <dbReference type="NCBI Taxonomy" id="559292"/>
    <lineage>
        <taxon>Eukaryota</taxon>
        <taxon>Fungi</taxon>
        <taxon>Dikarya</taxon>
        <taxon>Ascomycota</taxon>
        <taxon>Saccharomycotina</taxon>
        <taxon>Saccharomycetes</taxon>
        <taxon>Saccharomycetales</taxon>
        <taxon>Saccharomycetaceae</taxon>
        <taxon>Saccharomyces</taxon>
    </lineage>
</organism>
<protein>
    <recommendedName>
        <fullName>TEL2-interacting protein 2</fullName>
    </recommendedName>
</protein>
<comment type="function">
    <text>Component of the ASTRA complex probably in chromatin remodeling.</text>
</comment>
<comment type="subunit">
    <text evidence="3 4">Component of the ASTRA chromatin remodeling machinery complex composed of at least RVB1, RVB2, TRA1, TEL2, TT1 and TTI2. Component of the TTT complex composed of TEL2, TTI1 and TTI2. Interacts with TEL2 and TTI1.</text>
</comment>
<comment type="interaction">
    <interactant intactId="EBI-25698">
        <id>P47168</id>
    </interactant>
    <interactant intactId="EBI-26630">
        <id>P36097</id>
        <label>TTI1</label>
    </interactant>
    <organismsDiffer>false</organismsDiffer>
    <experiments>4</experiments>
</comment>
<comment type="subcellular location">
    <subcellularLocation>
        <location evidence="1">Cytoplasm</location>
    </subcellularLocation>
    <subcellularLocation>
        <location evidence="6">Nucleus</location>
    </subcellularLocation>
</comment>
<comment type="miscellaneous">
    <text evidence="2">Present with 1470 molecules/cell in log phase SD medium.</text>
</comment>
<comment type="similarity">
    <text evidence="5">Belongs to the TTI2 family.</text>
</comment>
<keyword id="KW-0156">Chromatin regulator</keyword>
<keyword id="KW-0963">Cytoplasm</keyword>
<keyword id="KW-0539">Nucleus</keyword>
<keyword id="KW-1185">Reference proteome</keyword>